<accession>B7LK78</accession>
<feature type="chain" id="PRO_1000134152" description="ATP synthase gamma chain">
    <location>
        <begin position="1"/>
        <end position="287"/>
    </location>
</feature>
<evidence type="ECO:0000255" key="1">
    <source>
        <dbReference type="HAMAP-Rule" id="MF_00815"/>
    </source>
</evidence>
<organism>
    <name type="scientific">Escherichia fergusonii (strain ATCC 35469 / DSM 13698 / CCUG 18766 / IAM 14443 / JCM 21226 / LMG 7866 / NBRC 102419 / NCTC 12128 / CDC 0568-73)</name>
    <dbReference type="NCBI Taxonomy" id="585054"/>
    <lineage>
        <taxon>Bacteria</taxon>
        <taxon>Pseudomonadati</taxon>
        <taxon>Pseudomonadota</taxon>
        <taxon>Gammaproteobacteria</taxon>
        <taxon>Enterobacterales</taxon>
        <taxon>Enterobacteriaceae</taxon>
        <taxon>Escherichia</taxon>
    </lineage>
</organism>
<gene>
    <name evidence="1" type="primary">atpG</name>
    <name type="ordered locus">EFER_4032</name>
</gene>
<reference key="1">
    <citation type="journal article" date="2009" name="PLoS Genet.">
        <title>Organised genome dynamics in the Escherichia coli species results in highly diverse adaptive paths.</title>
        <authorList>
            <person name="Touchon M."/>
            <person name="Hoede C."/>
            <person name="Tenaillon O."/>
            <person name="Barbe V."/>
            <person name="Baeriswyl S."/>
            <person name="Bidet P."/>
            <person name="Bingen E."/>
            <person name="Bonacorsi S."/>
            <person name="Bouchier C."/>
            <person name="Bouvet O."/>
            <person name="Calteau A."/>
            <person name="Chiapello H."/>
            <person name="Clermont O."/>
            <person name="Cruveiller S."/>
            <person name="Danchin A."/>
            <person name="Diard M."/>
            <person name="Dossat C."/>
            <person name="Karoui M.E."/>
            <person name="Frapy E."/>
            <person name="Garry L."/>
            <person name="Ghigo J.M."/>
            <person name="Gilles A.M."/>
            <person name="Johnson J."/>
            <person name="Le Bouguenec C."/>
            <person name="Lescat M."/>
            <person name="Mangenot S."/>
            <person name="Martinez-Jehanne V."/>
            <person name="Matic I."/>
            <person name="Nassif X."/>
            <person name="Oztas S."/>
            <person name="Petit M.A."/>
            <person name="Pichon C."/>
            <person name="Rouy Z."/>
            <person name="Ruf C.S."/>
            <person name="Schneider D."/>
            <person name="Tourret J."/>
            <person name="Vacherie B."/>
            <person name="Vallenet D."/>
            <person name="Medigue C."/>
            <person name="Rocha E.P.C."/>
            <person name="Denamur E."/>
        </authorList>
    </citation>
    <scope>NUCLEOTIDE SEQUENCE [LARGE SCALE GENOMIC DNA]</scope>
    <source>
        <strain>ATCC 35469 / DSM 13698 / BCRC 15582 / CCUG 18766 / IAM 14443 / JCM 21226 / LMG 7866 / NBRC 102419 / NCTC 12128 / CDC 0568-73</strain>
    </source>
</reference>
<name>ATPG_ESCF3</name>
<dbReference type="EMBL" id="CU928158">
    <property type="protein sequence ID" value="CAQ91466.1"/>
    <property type="molecule type" value="Genomic_DNA"/>
</dbReference>
<dbReference type="RefSeq" id="WP_000896498.1">
    <property type="nucleotide sequence ID" value="NC_011740.1"/>
</dbReference>
<dbReference type="SMR" id="B7LK78"/>
<dbReference type="GeneID" id="93778234"/>
<dbReference type="KEGG" id="efe:EFER_4032"/>
<dbReference type="HOGENOM" id="CLU_050669_0_1_6"/>
<dbReference type="OrthoDB" id="9812769at2"/>
<dbReference type="Proteomes" id="UP000000745">
    <property type="component" value="Chromosome"/>
</dbReference>
<dbReference type="GO" id="GO:0005886">
    <property type="term" value="C:plasma membrane"/>
    <property type="evidence" value="ECO:0007669"/>
    <property type="project" value="UniProtKB-SubCell"/>
</dbReference>
<dbReference type="GO" id="GO:0045259">
    <property type="term" value="C:proton-transporting ATP synthase complex"/>
    <property type="evidence" value="ECO:0007669"/>
    <property type="project" value="UniProtKB-KW"/>
</dbReference>
<dbReference type="GO" id="GO:0005524">
    <property type="term" value="F:ATP binding"/>
    <property type="evidence" value="ECO:0007669"/>
    <property type="project" value="UniProtKB-UniRule"/>
</dbReference>
<dbReference type="GO" id="GO:0046933">
    <property type="term" value="F:proton-transporting ATP synthase activity, rotational mechanism"/>
    <property type="evidence" value="ECO:0007669"/>
    <property type="project" value="UniProtKB-UniRule"/>
</dbReference>
<dbReference type="GO" id="GO:0042777">
    <property type="term" value="P:proton motive force-driven plasma membrane ATP synthesis"/>
    <property type="evidence" value="ECO:0007669"/>
    <property type="project" value="UniProtKB-UniRule"/>
</dbReference>
<dbReference type="CDD" id="cd12151">
    <property type="entry name" value="F1-ATPase_gamma"/>
    <property type="match status" value="1"/>
</dbReference>
<dbReference type="FunFam" id="1.10.287.80:FF:000005">
    <property type="entry name" value="ATP synthase gamma chain"/>
    <property type="match status" value="2"/>
</dbReference>
<dbReference type="FunFam" id="3.40.1380.10:FF:000001">
    <property type="entry name" value="ATP synthase gamma chain"/>
    <property type="match status" value="1"/>
</dbReference>
<dbReference type="Gene3D" id="3.40.1380.10">
    <property type="match status" value="1"/>
</dbReference>
<dbReference type="Gene3D" id="1.10.287.80">
    <property type="entry name" value="ATP synthase, gamma subunit, helix hairpin domain"/>
    <property type="match status" value="1"/>
</dbReference>
<dbReference type="HAMAP" id="MF_00815">
    <property type="entry name" value="ATP_synth_gamma_bact"/>
    <property type="match status" value="1"/>
</dbReference>
<dbReference type="InterPro" id="IPR035968">
    <property type="entry name" value="ATP_synth_F1_ATPase_gsu"/>
</dbReference>
<dbReference type="InterPro" id="IPR000131">
    <property type="entry name" value="ATP_synth_F1_gsu"/>
</dbReference>
<dbReference type="InterPro" id="IPR023632">
    <property type="entry name" value="ATP_synth_F1_gsu_CS"/>
</dbReference>
<dbReference type="NCBIfam" id="TIGR01146">
    <property type="entry name" value="ATPsyn_F1gamma"/>
    <property type="match status" value="1"/>
</dbReference>
<dbReference type="NCBIfam" id="NF004144">
    <property type="entry name" value="PRK05621.1-1"/>
    <property type="match status" value="1"/>
</dbReference>
<dbReference type="PANTHER" id="PTHR11693">
    <property type="entry name" value="ATP SYNTHASE GAMMA CHAIN"/>
    <property type="match status" value="1"/>
</dbReference>
<dbReference type="PANTHER" id="PTHR11693:SF22">
    <property type="entry name" value="ATP SYNTHASE SUBUNIT GAMMA, MITOCHONDRIAL"/>
    <property type="match status" value="1"/>
</dbReference>
<dbReference type="Pfam" id="PF00231">
    <property type="entry name" value="ATP-synt"/>
    <property type="match status" value="1"/>
</dbReference>
<dbReference type="PRINTS" id="PR00126">
    <property type="entry name" value="ATPASEGAMMA"/>
</dbReference>
<dbReference type="SUPFAM" id="SSF52943">
    <property type="entry name" value="ATP synthase (F1-ATPase), gamma subunit"/>
    <property type="match status" value="1"/>
</dbReference>
<dbReference type="PROSITE" id="PS00153">
    <property type="entry name" value="ATPASE_GAMMA"/>
    <property type="match status" value="1"/>
</dbReference>
<protein>
    <recommendedName>
        <fullName evidence="1">ATP synthase gamma chain</fullName>
    </recommendedName>
    <alternativeName>
        <fullName evidence="1">ATP synthase F1 sector gamma subunit</fullName>
    </alternativeName>
    <alternativeName>
        <fullName evidence="1">F-ATPase gamma subunit</fullName>
    </alternativeName>
</protein>
<comment type="function">
    <text evidence="1">Produces ATP from ADP in the presence of a proton gradient across the membrane. The gamma chain is believed to be important in regulating ATPase activity and the flow of protons through the CF(0) complex.</text>
</comment>
<comment type="subunit">
    <text evidence="1">F-type ATPases have 2 components, CF(1) - the catalytic core - and CF(0) - the membrane proton channel. CF(1) has five subunits: alpha(3), beta(3), gamma(1), delta(1), epsilon(1). CF(0) has three main subunits: a, b and c.</text>
</comment>
<comment type="subcellular location">
    <subcellularLocation>
        <location evidence="1">Cell inner membrane</location>
        <topology evidence="1">Peripheral membrane protein</topology>
    </subcellularLocation>
</comment>
<comment type="similarity">
    <text evidence="1">Belongs to the ATPase gamma chain family.</text>
</comment>
<keyword id="KW-0066">ATP synthesis</keyword>
<keyword id="KW-0997">Cell inner membrane</keyword>
<keyword id="KW-1003">Cell membrane</keyword>
<keyword id="KW-0139">CF(1)</keyword>
<keyword id="KW-0375">Hydrogen ion transport</keyword>
<keyword id="KW-0406">Ion transport</keyword>
<keyword id="KW-0472">Membrane</keyword>
<keyword id="KW-0813">Transport</keyword>
<sequence>MAGAKEIRSKIASVQNTQKITKAMEMVAASKMRKSQDRMAASRPYAETMRKVIGHLAHGNLEYKHPYLEDRDVKRVGYLVVSTDRGLCGGLNINLFKKLLAEMKTWTDKGVQCDLAMIGSKGVSFFNSVGGNVVAQVTGMGDNPSLSELIGPVKVMLQAYDEGRLDKLYIVSNKFINTMSQVPTISQLLPLPASDDDDLKHKSWDYLYEPDPKALLDTLLRRYVESQVYQGVVENLASEQAARMVAMKAATDNGGSLIKELQLVYNKARQASITQELTEIVSGAAAV</sequence>
<proteinExistence type="inferred from homology"/>